<proteinExistence type="inferred from homology"/>
<protein>
    <recommendedName>
        <fullName>GDP-mannose transporter</fullName>
        <shortName>GMT</shortName>
    </recommendedName>
</protein>
<sequence length="371" mass="41236">MGVISFYLIGQLLYLIRKKYTTTYRQQQQHQYNMDSKHSTSSSSSGSLATRISNSGPISIAAYCLSSILMTVTNKYVLSGFSFNLNFFLLAVQSIVCIVTIGSLKSLNIITYRQFNKDEAKKWSPIAFLLVAMIYTSSKALQYLSIPVYTIFKNLTIILIAYGEVIWFGGKVTTMALSSFLLMVLSSVIAYYGDNAAVKSHDDAFALYLGYFWMLTNCFASAAFVLIMRKRIKLTNFKDFDTMYYNNLLSIPILLICSFIFEDWSSANVSLNFPADNRVTTITAMILSGASSVGISYCSAWCVRVTSSTTYSMVGALNKLPIALSGLIFFEAAVNFWSVSSIFVGFGAGLVYAVAKQKQQKEQSQQLPTTK</sequence>
<organism>
    <name type="scientific">Candida albicans (strain SC5314 / ATCC MYA-2876)</name>
    <name type="common">Yeast</name>
    <dbReference type="NCBI Taxonomy" id="237561"/>
    <lineage>
        <taxon>Eukaryota</taxon>
        <taxon>Fungi</taxon>
        <taxon>Dikarya</taxon>
        <taxon>Ascomycota</taxon>
        <taxon>Saccharomycotina</taxon>
        <taxon>Pichiomycetes</taxon>
        <taxon>Debaryomycetaceae</taxon>
        <taxon>Candida/Lodderomyces clade</taxon>
        <taxon>Candida</taxon>
    </lineage>
</organism>
<dbReference type="EMBL" id="AF164627">
    <property type="protein sequence ID" value="AAK74075.1"/>
    <property type="molecule type" value="Genomic_DNA"/>
</dbReference>
<dbReference type="EMBL" id="CP017623">
    <property type="protein sequence ID" value="AOW26417.1"/>
    <property type="molecule type" value="Genomic_DNA"/>
</dbReference>
<dbReference type="RefSeq" id="XP_716540.2">
    <property type="nucleotide sequence ID" value="XM_711447.2"/>
</dbReference>
<dbReference type="SMR" id="Q5A477"/>
<dbReference type="FunCoup" id="Q5A477">
    <property type="interactions" value="565"/>
</dbReference>
<dbReference type="STRING" id="237561.Q5A477"/>
<dbReference type="TCDB" id="2.A.7.13.2">
    <property type="family name" value="the drug/metabolite transporter (dmt) superfamily"/>
</dbReference>
<dbReference type="GlyCosmos" id="Q5A477">
    <property type="glycosylation" value="1 site, No reported glycans"/>
</dbReference>
<dbReference type="EnsemblFungi" id="C1_07700C_A-T">
    <property type="protein sequence ID" value="C1_07700C_A-T-p1"/>
    <property type="gene ID" value="C1_07700C_A"/>
</dbReference>
<dbReference type="GeneID" id="3641768"/>
<dbReference type="KEGG" id="cal:CAALFM_C107700CA"/>
<dbReference type="CGD" id="CAL0000182900">
    <property type="gene designation" value="VRG4"/>
</dbReference>
<dbReference type="VEuPathDB" id="FungiDB:C1_07700C_A"/>
<dbReference type="eggNOG" id="KOG1444">
    <property type="taxonomic scope" value="Eukaryota"/>
</dbReference>
<dbReference type="HOGENOM" id="CLU_025360_1_2_1"/>
<dbReference type="InParanoid" id="Q5A477"/>
<dbReference type="OrthoDB" id="417037at2759"/>
<dbReference type="PRO" id="PR:Q5A477"/>
<dbReference type="Proteomes" id="UP000000559">
    <property type="component" value="Chromosome 1"/>
</dbReference>
<dbReference type="GO" id="GO:0030659">
    <property type="term" value="C:cytoplasmic vesicle membrane"/>
    <property type="evidence" value="ECO:0007669"/>
    <property type="project" value="UniProtKB-SubCell"/>
</dbReference>
<dbReference type="GO" id="GO:0005789">
    <property type="term" value="C:endoplasmic reticulum membrane"/>
    <property type="evidence" value="ECO:0007669"/>
    <property type="project" value="UniProtKB-SubCell"/>
</dbReference>
<dbReference type="GO" id="GO:0005794">
    <property type="term" value="C:Golgi apparatus"/>
    <property type="evidence" value="ECO:0000314"/>
    <property type="project" value="CGD"/>
</dbReference>
<dbReference type="GO" id="GO:0000139">
    <property type="term" value="C:Golgi membrane"/>
    <property type="evidence" value="ECO:0007669"/>
    <property type="project" value="UniProtKB-SubCell"/>
</dbReference>
<dbReference type="GO" id="GO:0015297">
    <property type="term" value="F:antiporter activity"/>
    <property type="evidence" value="ECO:0000318"/>
    <property type="project" value="GO_Central"/>
</dbReference>
<dbReference type="GO" id="GO:0005458">
    <property type="term" value="F:GDP-mannose transmembrane transporter activity"/>
    <property type="evidence" value="ECO:0000316"/>
    <property type="project" value="CGD"/>
</dbReference>
<dbReference type="GO" id="GO:1990570">
    <property type="term" value="P:GDP-mannose transmembrane transport"/>
    <property type="evidence" value="ECO:0000316"/>
    <property type="project" value="CGD"/>
</dbReference>
<dbReference type="GO" id="GO:0030448">
    <property type="term" value="P:hyphal growth"/>
    <property type="evidence" value="ECO:0000315"/>
    <property type="project" value="CGD"/>
</dbReference>
<dbReference type="GO" id="GO:0018279">
    <property type="term" value="P:protein N-linked glycosylation via asparagine"/>
    <property type="evidence" value="ECO:0000315"/>
    <property type="project" value="CGD"/>
</dbReference>
<dbReference type="InterPro" id="IPR050186">
    <property type="entry name" value="TPT_transporter"/>
</dbReference>
<dbReference type="NCBIfam" id="TIGR00803">
    <property type="entry name" value="nst"/>
    <property type="match status" value="1"/>
</dbReference>
<dbReference type="PANTHER" id="PTHR11132">
    <property type="entry name" value="SOLUTE CARRIER FAMILY 35"/>
    <property type="match status" value="1"/>
</dbReference>
<dbReference type="SUPFAM" id="SSF103481">
    <property type="entry name" value="Multidrug resistance efflux transporter EmrE"/>
    <property type="match status" value="1"/>
</dbReference>
<feature type="chain" id="PRO_0000333515" description="GDP-mannose transporter">
    <location>
        <begin position="1"/>
        <end position="371"/>
    </location>
</feature>
<feature type="topological domain" description="Cytoplasmic" evidence="1">
    <location>
        <begin position="1"/>
        <end position="51"/>
    </location>
</feature>
<feature type="transmembrane region" description="Helical" evidence="2">
    <location>
        <begin position="52"/>
        <end position="72"/>
    </location>
</feature>
<feature type="topological domain" description="Lumenal" evidence="1">
    <location>
        <begin position="73"/>
        <end position="80"/>
    </location>
</feature>
<feature type="transmembrane region" description="Helical" evidence="2">
    <location>
        <begin position="81"/>
        <end position="101"/>
    </location>
</feature>
<feature type="topological domain" description="Cytoplasmic" evidence="1">
    <location>
        <begin position="102"/>
        <end position="121"/>
    </location>
</feature>
<feature type="transmembrane region" description="Helical" evidence="2">
    <location>
        <begin position="122"/>
        <end position="138"/>
    </location>
</feature>
<feature type="topological domain" description="Lumenal" evidence="1">
    <location>
        <begin position="139"/>
        <end position="145"/>
    </location>
</feature>
<feature type="transmembrane region" description="Helical" evidence="2">
    <location>
        <begin position="146"/>
        <end position="162"/>
    </location>
</feature>
<feature type="topological domain" description="Cytoplasmic" evidence="1">
    <location>
        <begin position="163"/>
        <end position="171"/>
    </location>
</feature>
<feature type="transmembrane region" description="Helical" evidence="2">
    <location>
        <begin position="172"/>
        <end position="192"/>
    </location>
</feature>
<feature type="topological domain" description="Lumenal" evidence="1">
    <location>
        <begin position="193"/>
        <end position="206"/>
    </location>
</feature>
<feature type="transmembrane region" description="Helical" evidence="2">
    <location>
        <begin position="207"/>
        <end position="227"/>
    </location>
</feature>
<feature type="topological domain" description="Cytoplasmic" evidence="1">
    <location>
        <begin position="228"/>
        <end position="241"/>
    </location>
</feature>
<feature type="transmembrane region" description="Helical" evidence="2">
    <location>
        <begin position="242"/>
        <end position="262"/>
    </location>
</feature>
<feature type="topological domain" description="Lumenal" evidence="1">
    <location>
        <begin position="263"/>
        <end position="281"/>
    </location>
</feature>
<feature type="transmembrane region" description="Helical" evidence="2">
    <location>
        <begin position="282"/>
        <end position="302"/>
    </location>
</feature>
<feature type="topological domain" description="Cytoplasmic" evidence="1">
    <location>
        <begin position="303"/>
        <end position="309"/>
    </location>
</feature>
<feature type="transmembrane region" description="Helical" evidence="2">
    <location>
        <begin position="310"/>
        <end position="329"/>
    </location>
</feature>
<feature type="topological domain" description="Lumenal" evidence="1">
    <location>
        <begin position="330"/>
        <end position="332"/>
    </location>
</feature>
<feature type="transmembrane region" description="Helical" evidence="2">
    <location>
        <begin position="333"/>
        <end position="355"/>
    </location>
</feature>
<feature type="topological domain" description="Cytoplasmic" evidence="1">
    <location>
        <begin position="356"/>
        <end position="371"/>
    </location>
</feature>
<feature type="glycosylation site" description="N-linked (GlcNAc...) asparagine" evidence="2">
    <location>
        <position position="268"/>
    </location>
</feature>
<feature type="sequence conflict" description="In Ref. 1; AAK74075." ref="1">
    <original>H</original>
    <variation>Y</variation>
    <location>
        <position position="30"/>
    </location>
</feature>
<gene>
    <name type="primary">VRG4</name>
    <name type="ordered locus">CAALFM_C107700CA</name>
    <name type="ORF">CaO19.1232</name>
    <name type="ORF">CaO19.8817</name>
</gene>
<comment type="function">
    <text evidence="3">Involved in the import of GDP-mannose from the cytoplasm into the Golgi lumen. Involved in hyphal formation.</text>
</comment>
<comment type="subunit">
    <text evidence="1">Homooligomer.</text>
</comment>
<comment type="subcellular location">
    <subcellularLocation>
        <location evidence="3">Golgi apparatus membrane</location>
        <topology evidence="3">Multi-pass membrane protein</topology>
    </subcellularLocation>
    <subcellularLocation>
        <location evidence="3">Cytoplasmic vesicle membrane</location>
        <topology evidence="3">Multi-pass membrane protein</topology>
    </subcellularLocation>
    <subcellularLocation>
        <location evidence="3">Endoplasmic reticulum membrane</location>
        <topology evidence="3">Multi-pass membrane protein</topology>
    </subcellularLocation>
</comment>
<comment type="similarity">
    <text evidence="4">Belongs to the TPT transporter family. SLC35D subfamily.</text>
</comment>
<reference key="1">
    <citation type="journal article" date="2002" name="J. Bacteriol.">
        <title>Molecular and phenotypic analysis of CaVRG4, encoding an essential Golgi apparatus GDP-mannose transporter.</title>
        <authorList>
            <person name="Nishikawa A."/>
            <person name="Poster J.B."/>
            <person name="Jigami Y."/>
            <person name="Dean N."/>
        </authorList>
    </citation>
    <scope>NUCLEOTIDE SEQUENCE [GENOMIC DNA]</scope>
    <scope>FUNCTION</scope>
    <scope>SUBCELLULAR LOCATION</scope>
    <source>
        <strain>SC5314 / CAI4 / ATCC MYA-682</strain>
    </source>
</reference>
<reference key="2">
    <citation type="journal article" date="2004" name="Proc. Natl. Acad. Sci. U.S.A.">
        <title>The diploid genome sequence of Candida albicans.</title>
        <authorList>
            <person name="Jones T."/>
            <person name="Federspiel N.A."/>
            <person name="Chibana H."/>
            <person name="Dungan J."/>
            <person name="Kalman S."/>
            <person name="Magee B.B."/>
            <person name="Newport G."/>
            <person name="Thorstenson Y.R."/>
            <person name="Agabian N."/>
            <person name="Magee P.T."/>
            <person name="Davis R.W."/>
            <person name="Scherer S."/>
        </authorList>
    </citation>
    <scope>NUCLEOTIDE SEQUENCE [LARGE SCALE GENOMIC DNA]</scope>
    <source>
        <strain>SC5314 / ATCC MYA-2876</strain>
    </source>
</reference>
<reference key="3">
    <citation type="journal article" date="2007" name="Genome Biol.">
        <title>Assembly of the Candida albicans genome into sixteen supercontigs aligned on the eight chromosomes.</title>
        <authorList>
            <person name="van het Hoog M."/>
            <person name="Rast T.J."/>
            <person name="Martchenko M."/>
            <person name="Grindle S."/>
            <person name="Dignard D."/>
            <person name="Hogues H."/>
            <person name="Cuomo C."/>
            <person name="Berriman M."/>
            <person name="Scherer S."/>
            <person name="Magee B.B."/>
            <person name="Whiteway M."/>
            <person name="Chibana H."/>
            <person name="Nantel A."/>
            <person name="Magee P.T."/>
        </authorList>
    </citation>
    <scope>GENOME REANNOTATION</scope>
    <source>
        <strain>SC5314 / ATCC MYA-2876</strain>
    </source>
</reference>
<reference key="4">
    <citation type="journal article" date="2013" name="Genome Biol.">
        <title>Assembly of a phased diploid Candida albicans genome facilitates allele-specific measurements and provides a simple model for repeat and indel structure.</title>
        <authorList>
            <person name="Muzzey D."/>
            <person name="Schwartz K."/>
            <person name="Weissman J.S."/>
            <person name="Sherlock G."/>
        </authorList>
    </citation>
    <scope>NUCLEOTIDE SEQUENCE [LARGE SCALE GENOMIC DNA]</scope>
    <scope>GENOME REANNOTATION</scope>
    <source>
        <strain>SC5314 / ATCC MYA-2876</strain>
    </source>
</reference>
<evidence type="ECO:0000250" key="1"/>
<evidence type="ECO:0000255" key="2"/>
<evidence type="ECO:0000269" key="3">
    <source>
    </source>
</evidence>
<evidence type="ECO:0000305" key="4"/>
<name>GMT_CANAL</name>
<keyword id="KW-0968">Cytoplasmic vesicle</keyword>
<keyword id="KW-0256">Endoplasmic reticulum</keyword>
<keyword id="KW-0325">Glycoprotein</keyword>
<keyword id="KW-0333">Golgi apparatus</keyword>
<keyword id="KW-0472">Membrane</keyword>
<keyword id="KW-1185">Reference proteome</keyword>
<keyword id="KW-0762">Sugar transport</keyword>
<keyword id="KW-0812">Transmembrane</keyword>
<keyword id="KW-1133">Transmembrane helix</keyword>
<keyword id="KW-0813">Transport</keyword>
<accession>Q5A477</accession>
<accession>A0A1D8PE59</accession>
<accession>Q96WN8</accession>